<feature type="chain" id="PRO_0000333299" description="Bifunctional pantoate ligase/cytidylate kinase">
    <location>
        <begin position="1"/>
        <end position="516"/>
    </location>
</feature>
<feature type="region of interest" description="Pantoate--beta-alanine ligase">
    <location>
        <begin position="1"/>
        <end position="279"/>
    </location>
</feature>
<feature type="region of interest" description="Cytidylate kinase" evidence="1">
    <location>
        <begin position="280"/>
        <end position="516"/>
    </location>
</feature>
<feature type="active site" description="Proton donor" evidence="1">
    <location>
        <position position="36"/>
    </location>
</feature>
<feature type="binding site" evidence="1">
    <location>
        <begin position="29"/>
        <end position="36"/>
    </location>
    <ligand>
        <name>ATP</name>
        <dbReference type="ChEBI" id="CHEBI:30616"/>
    </ligand>
</feature>
<feature type="binding site" evidence="1">
    <location>
        <position position="64"/>
    </location>
    <ligand>
        <name>(R)-pantoate</name>
        <dbReference type="ChEBI" id="CHEBI:15980"/>
    </ligand>
</feature>
<feature type="binding site" evidence="1">
    <location>
        <position position="64"/>
    </location>
    <ligand>
        <name>beta-alanine</name>
        <dbReference type="ChEBI" id="CHEBI:57966"/>
    </ligand>
</feature>
<feature type="binding site" evidence="1">
    <location>
        <begin position="153"/>
        <end position="156"/>
    </location>
    <ligand>
        <name>ATP</name>
        <dbReference type="ChEBI" id="CHEBI:30616"/>
    </ligand>
</feature>
<feature type="binding site" evidence="1">
    <location>
        <position position="159"/>
    </location>
    <ligand>
        <name>(R)-pantoate</name>
        <dbReference type="ChEBI" id="CHEBI:15980"/>
    </ligand>
</feature>
<feature type="binding site" evidence="1">
    <location>
        <begin position="190"/>
        <end position="193"/>
    </location>
    <ligand>
        <name>ATP</name>
        <dbReference type="ChEBI" id="CHEBI:30616"/>
    </ligand>
</feature>
<organism>
    <name type="scientific">Prochlorococcus marinus (strain NATL1A)</name>
    <dbReference type="NCBI Taxonomy" id="167555"/>
    <lineage>
        <taxon>Bacteria</taxon>
        <taxon>Bacillati</taxon>
        <taxon>Cyanobacteriota</taxon>
        <taxon>Cyanophyceae</taxon>
        <taxon>Synechococcales</taxon>
        <taxon>Prochlorococcaceae</taxon>
        <taxon>Prochlorococcus</taxon>
    </lineage>
</organism>
<evidence type="ECO:0000255" key="1">
    <source>
        <dbReference type="HAMAP-Rule" id="MF_01349"/>
    </source>
</evidence>
<proteinExistence type="inferred from homology"/>
<protein>
    <recommendedName>
        <fullName evidence="1">Bifunctional pantoate ligase/cytidylate kinase</fullName>
    </recommendedName>
    <domain>
        <recommendedName>
            <fullName evidence="1">Pantothenate synthetase</fullName>
            <shortName evidence="1">PS</shortName>
            <ecNumber evidence="1">6.3.2.1</ecNumber>
        </recommendedName>
        <alternativeName>
            <fullName evidence="1">Pantoate--beta-alanine ligase</fullName>
        </alternativeName>
        <alternativeName>
            <fullName evidence="1">Pantoate-activating enzyme</fullName>
        </alternativeName>
    </domain>
    <domain>
        <recommendedName>
            <fullName evidence="1">Cytidylate kinase</fullName>
            <shortName evidence="1">CK</shortName>
            <ecNumber evidence="1">2.7.4.25</ecNumber>
        </recommendedName>
        <alternativeName>
            <fullName evidence="1">Cytidine monophosphate kinase</fullName>
            <shortName evidence="1">CMP kinase</shortName>
        </alternativeName>
    </domain>
</protein>
<gene>
    <name evidence="1" type="primary">panC/cmk</name>
    <name type="ordered locus">NATL1_20401</name>
</gene>
<keyword id="KW-0067">ATP-binding</keyword>
<keyword id="KW-0963">Cytoplasm</keyword>
<keyword id="KW-0418">Kinase</keyword>
<keyword id="KW-0436">Ligase</keyword>
<keyword id="KW-0511">Multifunctional enzyme</keyword>
<keyword id="KW-0547">Nucleotide-binding</keyword>
<keyword id="KW-0566">Pantothenate biosynthesis</keyword>
<keyword id="KW-0808">Transferase</keyword>
<sequence length="516" mass="58348">MVRKIFQTNAELKDWLSEQNSAIIFIPTMGGLHPGHQYLIQKAKERKTNTNQIILVSIFVNPLQFSKGEDFKKYPRNINRDAELAFSAGADAIWAPDYDEVFPGGADSHFKIEVPKTLHNQLCGAERKGHFDGVATVIIRLIKIIKPKKLVLGEKDWQQLIIIRKLFQELSIPVKIESYSTQRDQSGFAYSSRNSYLSDSERVNAQSLPNAIKEAKTEFDKGKVINLTKIASIFKENNLKIEYLKIVDPFSLKETENINRLCLLAVAVKCGSTRLIDHTFLMHRKPIIAIDGPAGAGKSTVTKAFAKKLGFIYLDTGAMYRAVTWLIISNSIDPNDQVEIKNILKDSKLEFKSSSFVEQKIFINNIDVTEKIRSPKVTSMVSEIAKQQFVRELLTRKQQVIGNNGGLVAEGRDIGTAVFPDADLKIFLTASPTERAKRRALDLHKRGYEFSSIEDLEKEIKERDKKDSERKIAPLKKAQDAIELVTDGMNIEDVLKELIDIFRSKIPEEVWPTPNS</sequence>
<comment type="function">
    <text evidence="1">Catalyzes the condensation of pantoate with beta-alanine in an ATP-dependent reaction via a pantoyl-adenylate intermediate.</text>
</comment>
<comment type="function">
    <text evidence="1">Catalyzes the transfer of a phosphate group from ATP to either CMP or dCMP to form CDP or dCDP and ADP, respectively.</text>
</comment>
<comment type="catalytic activity">
    <reaction evidence="1">
        <text>(R)-pantoate + beta-alanine + ATP = (R)-pantothenate + AMP + diphosphate + H(+)</text>
        <dbReference type="Rhea" id="RHEA:10912"/>
        <dbReference type="ChEBI" id="CHEBI:15378"/>
        <dbReference type="ChEBI" id="CHEBI:15980"/>
        <dbReference type="ChEBI" id="CHEBI:29032"/>
        <dbReference type="ChEBI" id="CHEBI:30616"/>
        <dbReference type="ChEBI" id="CHEBI:33019"/>
        <dbReference type="ChEBI" id="CHEBI:57966"/>
        <dbReference type="ChEBI" id="CHEBI:456215"/>
        <dbReference type="EC" id="6.3.2.1"/>
    </reaction>
</comment>
<comment type="catalytic activity">
    <reaction evidence="1">
        <text>CMP + ATP = CDP + ADP</text>
        <dbReference type="Rhea" id="RHEA:11600"/>
        <dbReference type="ChEBI" id="CHEBI:30616"/>
        <dbReference type="ChEBI" id="CHEBI:58069"/>
        <dbReference type="ChEBI" id="CHEBI:60377"/>
        <dbReference type="ChEBI" id="CHEBI:456216"/>
        <dbReference type="EC" id="2.7.4.25"/>
    </reaction>
</comment>
<comment type="catalytic activity">
    <reaction evidence="1">
        <text>dCMP + ATP = dCDP + ADP</text>
        <dbReference type="Rhea" id="RHEA:25094"/>
        <dbReference type="ChEBI" id="CHEBI:30616"/>
        <dbReference type="ChEBI" id="CHEBI:57566"/>
        <dbReference type="ChEBI" id="CHEBI:58593"/>
        <dbReference type="ChEBI" id="CHEBI:456216"/>
        <dbReference type="EC" id="2.7.4.25"/>
    </reaction>
</comment>
<comment type="pathway">
    <text evidence="1">Cofactor biosynthesis; (R)-pantothenate biosynthesis; (R)-pantothenate from (R)-pantoate and beta-alanine: step 1/1.</text>
</comment>
<comment type="subcellular location">
    <subcellularLocation>
        <location evidence="1">Cytoplasm</location>
    </subcellularLocation>
</comment>
<comment type="similarity">
    <text evidence="1">In the N-terminal section; belongs to the pantothenate synthetase family.</text>
</comment>
<comment type="similarity">
    <text evidence="1">In the C-terminal section; belongs to the cytidylate kinase family. Type 1 subfamily.</text>
</comment>
<accession>A2C536</accession>
<dbReference type="EC" id="6.3.2.1" evidence="1"/>
<dbReference type="EC" id="2.7.4.25" evidence="1"/>
<dbReference type="EMBL" id="CP000553">
    <property type="protein sequence ID" value="ABM76596.1"/>
    <property type="molecule type" value="Genomic_DNA"/>
</dbReference>
<dbReference type="RefSeq" id="WP_011824546.1">
    <property type="nucleotide sequence ID" value="NC_008819.1"/>
</dbReference>
<dbReference type="SMR" id="A2C536"/>
<dbReference type="KEGG" id="pme:NATL1_20401"/>
<dbReference type="eggNOG" id="COG0283">
    <property type="taxonomic scope" value="Bacteria"/>
</dbReference>
<dbReference type="eggNOG" id="COG0414">
    <property type="taxonomic scope" value="Bacteria"/>
</dbReference>
<dbReference type="HOGENOM" id="CLU_037427_0_0_3"/>
<dbReference type="UniPathway" id="UPA00028">
    <property type="reaction ID" value="UER00005"/>
</dbReference>
<dbReference type="Proteomes" id="UP000002592">
    <property type="component" value="Chromosome"/>
</dbReference>
<dbReference type="GO" id="GO:0005829">
    <property type="term" value="C:cytosol"/>
    <property type="evidence" value="ECO:0007669"/>
    <property type="project" value="TreeGrafter"/>
</dbReference>
<dbReference type="GO" id="GO:0005524">
    <property type="term" value="F:ATP binding"/>
    <property type="evidence" value="ECO:0007669"/>
    <property type="project" value="UniProtKB-UniRule"/>
</dbReference>
<dbReference type="GO" id="GO:0036430">
    <property type="term" value="F:CMP kinase activity"/>
    <property type="evidence" value="ECO:0007669"/>
    <property type="project" value="RHEA"/>
</dbReference>
<dbReference type="GO" id="GO:0036431">
    <property type="term" value="F:dCMP kinase activity"/>
    <property type="evidence" value="ECO:0007669"/>
    <property type="project" value="RHEA"/>
</dbReference>
<dbReference type="GO" id="GO:0004592">
    <property type="term" value="F:pantoate-beta-alanine ligase activity"/>
    <property type="evidence" value="ECO:0007669"/>
    <property type="project" value="UniProtKB-UniRule"/>
</dbReference>
<dbReference type="GO" id="GO:0015949">
    <property type="term" value="P:nucleobase-containing small molecule interconversion"/>
    <property type="evidence" value="ECO:0007669"/>
    <property type="project" value="TreeGrafter"/>
</dbReference>
<dbReference type="GO" id="GO:0015940">
    <property type="term" value="P:pantothenate biosynthetic process"/>
    <property type="evidence" value="ECO:0007669"/>
    <property type="project" value="UniProtKB-UniRule"/>
</dbReference>
<dbReference type="GO" id="GO:0006220">
    <property type="term" value="P:pyrimidine nucleotide metabolic process"/>
    <property type="evidence" value="ECO:0007669"/>
    <property type="project" value="UniProtKB-UniRule"/>
</dbReference>
<dbReference type="CDD" id="cd02020">
    <property type="entry name" value="CMPK"/>
    <property type="match status" value="1"/>
</dbReference>
<dbReference type="Gene3D" id="3.40.50.620">
    <property type="entry name" value="HUPs"/>
    <property type="match status" value="1"/>
</dbReference>
<dbReference type="Gene3D" id="3.40.50.300">
    <property type="entry name" value="P-loop containing nucleotide triphosphate hydrolases"/>
    <property type="match status" value="1"/>
</dbReference>
<dbReference type="Gene3D" id="3.30.1300.10">
    <property type="entry name" value="Pantoate-beta-alanine ligase, C-terminal domain"/>
    <property type="match status" value="1"/>
</dbReference>
<dbReference type="HAMAP" id="MF_00238">
    <property type="entry name" value="Cytidyl_kinase_type1"/>
    <property type="match status" value="1"/>
</dbReference>
<dbReference type="HAMAP" id="MF_00158">
    <property type="entry name" value="PanC"/>
    <property type="match status" value="1"/>
</dbReference>
<dbReference type="HAMAP" id="MF_01349">
    <property type="entry name" value="PanCY"/>
    <property type="match status" value="1"/>
</dbReference>
<dbReference type="InterPro" id="IPR003136">
    <property type="entry name" value="Cytidylate_kin"/>
</dbReference>
<dbReference type="InterPro" id="IPR011994">
    <property type="entry name" value="Cytidylate_kinase_dom"/>
</dbReference>
<dbReference type="InterPro" id="IPR027417">
    <property type="entry name" value="P-loop_NTPase"/>
</dbReference>
<dbReference type="InterPro" id="IPR003721">
    <property type="entry name" value="Pantoate_ligase"/>
</dbReference>
<dbReference type="InterPro" id="IPR024894">
    <property type="entry name" value="Pantoate_ligase/cytidylate_kin"/>
</dbReference>
<dbReference type="InterPro" id="IPR042176">
    <property type="entry name" value="Pantoate_ligase_C"/>
</dbReference>
<dbReference type="InterPro" id="IPR014729">
    <property type="entry name" value="Rossmann-like_a/b/a_fold"/>
</dbReference>
<dbReference type="NCBIfam" id="TIGR00017">
    <property type="entry name" value="cmk"/>
    <property type="match status" value="1"/>
</dbReference>
<dbReference type="NCBIfam" id="TIGR00018">
    <property type="entry name" value="panC"/>
    <property type="match status" value="1"/>
</dbReference>
<dbReference type="NCBIfam" id="NF010004">
    <property type="entry name" value="PRK13477.1"/>
    <property type="match status" value="1"/>
</dbReference>
<dbReference type="PANTHER" id="PTHR21299:SF2">
    <property type="entry name" value="CYTIDYLATE KINASE"/>
    <property type="match status" value="1"/>
</dbReference>
<dbReference type="PANTHER" id="PTHR21299">
    <property type="entry name" value="CYTIDYLATE KINASE/PANTOATE-BETA-ALANINE LIGASE"/>
    <property type="match status" value="1"/>
</dbReference>
<dbReference type="Pfam" id="PF02224">
    <property type="entry name" value="Cytidylate_kin"/>
    <property type="match status" value="1"/>
</dbReference>
<dbReference type="Pfam" id="PF02569">
    <property type="entry name" value="Pantoate_ligase"/>
    <property type="match status" value="1"/>
</dbReference>
<dbReference type="SUPFAM" id="SSF52374">
    <property type="entry name" value="Nucleotidylyl transferase"/>
    <property type="match status" value="1"/>
</dbReference>
<dbReference type="SUPFAM" id="SSF52540">
    <property type="entry name" value="P-loop containing nucleoside triphosphate hydrolases"/>
    <property type="match status" value="1"/>
</dbReference>
<reference key="1">
    <citation type="journal article" date="2007" name="PLoS Genet.">
        <title>Patterns and implications of gene gain and loss in the evolution of Prochlorococcus.</title>
        <authorList>
            <person name="Kettler G.C."/>
            <person name="Martiny A.C."/>
            <person name="Huang K."/>
            <person name="Zucker J."/>
            <person name="Coleman M.L."/>
            <person name="Rodrigue S."/>
            <person name="Chen F."/>
            <person name="Lapidus A."/>
            <person name="Ferriera S."/>
            <person name="Johnson J."/>
            <person name="Steglich C."/>
            <person name="Church G.M."/>
            <person name="Richardson P."/>
            <person name="Chisholm S.W."/>
        </authorList>
    </citation>
    <scope>NUCLEOTIDE SEQUENCE [LARGE SCALE GENOMIC DNA]</scope>
    <source>
        <strain>NATL1A</strain>
    </source>
</reference>
<name>PANCY_PROM1</name>